<dbReference type="EC" id="1.1.1.290" evidence="1"/>
<dbReference type="EMBL" id="CP000880">
    <property type="protein sequence ID" value="ABX20455.1"/>
    <property type="molecule type" value="Genomic_DNA"/>
</dbReference>
<dbReference type="SMR" id="A9MJ55"/>
<dbReference type="STRING" id="41514.SARI_00529"/>
<dbReference type="KEGG" id="ses:SARI_00529"/>
<dbReference type="HOGENOM" id="CLU_019796_4_0_6"/>
<dbReference type="UniPathway" id="UPA00244">
    <property type="reaction ID" value="UER00310"/>
</dbReference>
<dbReference type="Proteomes" id="UP000002084">
    <property type="component" value="Chromosome"/>
</dbReference>
<dbReference type="GO" id="GO:0005829">
    <property type="term" value="C:cytosol"/>
    <property type="evidence" value="ECO:0007669"/>
    <property type="project" value="TreeGrafter"/>
</dbReference>
<dbReference type="GO" id="GO:0033711">
    <property type="term" value="F:4-phosphoerythronate dehydrogenase activity"/>
    <property type="evidence" value="ECO:0007669"/>
    <property type="project" value="UniProtKB-EC"/>
</dbReference>
<dbReference type="GO" id="GO:0051287">
    <property type="term" value="F:NAD binding"/>
    <property type="evidence" value="ECO:0007669"/>
    <property type="project" value="InterPro"/>
</dbReference>
<dbReference type="GO" id="GO:0046983">
    <property type="term" value="F:protein dimerization activity"/>
    <property type="evidence" value="ECO:0007669"/>
    <property type="project" value="InterPro"/>
</dbReference>
<dbReference type="GO" id="GO:0036001">
    <property type="term" value="P:'de novo' pyridoxal 5'-phosphate biosynthetic process"/>
    <property type="evidence" value="ECO:0007669"/>
    <property type="project" value="TreeGrafter"/>
</dbReference>
<dbReference type="GO" id="GO:0008615">
    <property type="term" value="P:pyridoxine biosynthetic process"/>
    <property type="evidence" value="ECO:0007669"/>
    <property type="project" value="UniProtKB-UniRule"/>
</dbReference>
<dbReference type="CDD" id="cd12158">
    <property type="entry name" value="ErythrP_dh"/>
    <property type="match status" value="1"/>
</dbReference>
<dbReference type="FunFam" id="3.30.1370.170:FF:000001">
    <property type="entry name" value="Erythronate-4-phosphate dehydrogenase"/>
    <property type="match status" value="1"/>
</dbReference>
<dbReference type="FunFam" id="3.40.50.720:FF:000093">
    <property type="entry name" value="Erythronate-4-phosphate dehydrogenase"/>
    <property type="match status" value="1"/>
</dbReference>
<dbReference type="Gene3D" id="3.30.1370.170">
    <property type="match status" value="1"/>
</dbReference>
<dbReference type="Gene3D" id="3.40.50.720">
    <property type="entry name" value="NAD(P)-binding Rossmann-like Domain"/>
    <property type="match status" value="2"/>
</dbReference>
<dbReference type="HAMAP" id="MF_01825">
    <property type="entry name" value="PdxB"/>
    <property type="match status" value="1"/>
</dbReference>
<dbReference type="InterPro" id="IPR006139">
    <property type="entry name" value="D-isomer_2_OHA_DH_cat_dom"/>
</dbReference>
<dbReference type="InterPro" id="IPR029753">
    <property type="entry name" value="D-isomer_DH_CS"/>
</dbReference>
<dbReference type="InterPro" id="IPR029752">
    <property type="entry name" value="D-isomer_DH_CS1"/>
</dbReference>
<dbReference type="InterPro" id="IPR006140">
    <property type="entry name" value="D-isomer_DH_NAD-bd"/>
</dbReference>
<dbReference type="InterPro" id="IPR020921">
    <property type="entry name" value="Erythronate-4-P_DHase"/>
</dbReference>
<dbReference type="InterPro" id="IPR024531">
    <property type="entry name" value="Erythronate-4-P_DHase_dimer"/>
</dbReference>
<dbReference type="InterPro" id="IPR036291">
    <property type="entry name" value="NAD(P)-bd_dom_sf"/>
</dbReference>
<dbReference type="InterPro" id="IPR038251">
    <property type="entry name" value="PdxB_dimer_sf"/>
</dbReference>
<dbReference type="NCBIfam" id="NF001309">
    <property type="entry name" value="PRK00257.1"/>
    <property type="match status" value="1"/>
</dbReference>
<dbReference type="NCBIfam" id="NF011966">
    <property type="entry name" value="PRK15438.1"/>
    <property type="match status" value="1"/>
</dbReference>
<dbReference type="PANTHER" id="PTHR42938">
    <property type="entry name" value="FORMATE DEHYDROGENASE 1"/>
    <property type="match status" value="1"/>
</dbReference>
<dbReference type="PANTHER" id="PTHR42938:SF9">
    <property type="entry name" value="FORMATE DEHYDROGENASE 1"/>
    <property type="match status" value="1"/>
</dbReference>
<dbReference type="Pfam" id="PF00389">
    <property type="entry name" value="2-Hacid_dh"/>
    <property type="match status" value="1"/>
</dbReference>
<dbReference type="Pfam" id="PF02826">
    <property type="entry name" value="2-Hacid_dh_C"/>
    <property type="match status" value="1"/>
</dbReference>
<dbReference type="Pfam" id="PF11890">
    <property type="entry name" value="DUF3410"/>
    <property type="match status" value="1"/>
</dbReference>
<dbReference type="SUPFAM" id="SSF52283">
    <property type="entry name" value="Formate/glycerate dehydrogenase catalytic domain-like"/>
    <property type="match status" value="1"/>
</dbReference>
<dbReference type="SUPFAM" id="SSF51735">
    <property type="entry name" value="NAD(P)-binding Rossmann-fold domains"/>
    <property type="match status" value="1"/>
</dbReference>
<dbReference type="PROSITE" id="PS00065">
    <property type="entry name" value="D_2_HYDROXYACID_DH_1"/>
    <property type="match status" value="1"/>
</dbReference>
<dbReference type="PROSITE" id="PS00671">
    <property type="entry name" value="D_2_HYDROXYACID_DH_3"/>
    <property type="match status" value="1"/>
</dbReference>
<reference key="1">
    <citation type="submission" date="2007-11" db="EMBL/GenBank/DDBJ databases">
        <authorList>
            <consortium name="The Salmonella enterica serovar Arizonae Genome Sequencing Project"/>
            <person name="McClelland M."/>
            <person name="Sanderson E.K."/>
            <person name="Porwollik S."/>
            <person name="Spieth J."/>
            <person name="Clifton W.S."/>
            <person name="Fulton R."/>
            <person name="Chunyan W."/>
            <person name="Wollam A."/>
            <person name="Shah N."/>
            <person name="Pepin K."/>
            <person name="Bhonagiri V."/>
            <person name="Nash W."/>
            <person name="Johnson M."/>
            <person name="Thiruvilangam P."/>
            <person name="Wilson R."/>
        </authorList>
    </citation>
    <scope>NUCLEOTIDE SEQUENCE [LARGE SCALE GENOMIC DNA]</scope>
    <source>
        <strain>ATCC BAA-731 / CDC346-86 / RSK2980</strain>
    </source>
</reference>
<feature type="chain" id="PRO_1000088425" description="Erythronate-4-phosphate dehydrogenase">
    <location>
        <begin position="1"/>
        <end position="378"/>
    </location>
</feature>
<feature type="active site" evidence="1">
    <location>
        <position position="208"/>
    </location>
</feature>
<feature type="active site" evidence="1">
    <location>
        <position position="237"/>
    </location>
</feature>
<feature type="active site" description="Proton donor" evidence="1">
    <location>
        <position position="254"/>
    </location>
</feature>
<feature type="binding site" evidence="1">
    <location>
        <position position="45"/>
    </location>
    <ligand>
        <name>substrate</name>
    </ligand>
</feature>
<feature type="binding site" evidence="1">
    <location>
        <position position="66"/>
    </location>
    <ligand>
        <name>substrate</name>
    </ligand>
</feature>
<feature type="binding site" evidence="1">
    <location>
        <position position="146"/>
    </location>
    <ligand>
        <name>NAD(+)</name>
        <dbReference type="ChEBI" id="CHEBI:57540"/>
    </ligand>
</feature>
<feature type="binding site" evidence="1">
    <location>
        <position position="175"/>
    </location>
    <ligand>
        <name>NAD(+)</name>
        <dbReference type="ChEBI" id="CHEBI:57540"/>
    </ligand>
</feature>
<feature type="binding site" evidence="1">
    <location>
        <position position="232"/>
    </location>
    <ligand>
        <name>NAD(+)</name>
        <dbReference type="ChEBI" id="CHEBI:57540"/>
    </ligand>
</feature>
<feature type="binding site" evidence="1">
    <location>
        <position position="257"/>
    </location>
    <ligand>
        <name>NAD(+)</name>
        <dbReference type="ChEBI" id="CHEBI:57540"/>
    </ligand>
</feature>
<feature type="binding site" evidence="1">
    <location>
        <position position="258"/>
    </location>
    <ligand>
        <name>substrate</name>
    </ligand>
</feature>
<gene>
    <name evidence="1" type="primary">pdxB</name>
    <name type="ordered locus">SARI_00529</name>
</gene>
<name>PDXB_SALAR</name>
<sequence>MKILVDENMPYARELFSRLGEVKTVPGRPIPVEELNHADALMVRSVTKVNESLLSGTPIKFVGTATAGTDHVDEAWLKQEGIGFSAAPGCNAIAVVEYVFSALLMLAERDGFSLRDRTVGIVGVGNVGSRLQTRLEALGIRTLLCDPPRAARGDEGDFRTMDEVVEEADVLTFHTPLYKDGPYKTLHLVDETLIRRLKPGAILINACRGPVVDNAALLARLTAGQPISVVLDVWEGEPDLNVALLDAVDIGTSHIAGYTLEGKARGTTQVFEAYSAFIGREQHVALETLLPAPEFGRITLHGPLDQPTLKRLAHLVYDVRRDDAPLRKVAGIPGEFDKLRKNYLERREWSSLYVMCDDASAAALLQKLGFNAVHHPAR</sequence>
<evidence type="ECO:0000255" key="1">
    <source>
        <dbReference type="HAMAP-Rule" id="MF_01825"/>
    </source>
</evidence>
<protein>
    <recommendedName>
        <fullName evidence="1">Erythronate-4-phosphate dehydrogenase</fullName>
        <ecNumber evidence="1">1.1.1.290</ecNumber>
    </recommendedName>
</protein>
<keyword id="KW-0963">Cytoplasm</keyword>
<keyword id="KW-0520">NAD</keyword>
<keyword id="KW-0560">Oxidoreductase</keyword>
<keyword id="KW-0664">Pyridoxine biosynthesis</keyword>
<keyword id="KW-1185">Reference proteome</keyword>
<organism>
    <name type="scientific">Salmonella arizonae (strain ATCC BAA-731 / CDC346-86 / RSK2980)</name>
    <dbReference type="NCBI Taxonomy" id="41514"/>
    <lineage>
        <taxon>Bacteria</taxon>
        <taxon>Pseudomonadati</taxon>
        <taxon>Pseudomonadota</taxon>
        <taxon>Gammaproteobacteria</taxon>
        <taxon>Enterobacterales</taxon>
        <taxon>Enterobacteriaceae</taxon>
        <taxon>Salmonella</taxon>
    </lineage>
</organism>
<proteinExistence type="inferred from homology"/>
<accession>A9MJ55</accession>
<comment type="function">
    <text evidence="1">Catalyzes the oxidation of erythronate-4-phosphate to 3-hydroxy-2-oxo-4-phosphonooxybutanoate.</text>
</comment>
<comment type="catalytic activity">
    <reaction evidence="1">
        <text>4-phospho-D-erythronate + NAD(+) = (R)-3-hydroxy-2-oxo-4-phosphooxybutanoate + NADH + H(+)</text>
        <dbReference type="Rhea" id="RHEA:18829"/>
        <dbReference type="ChEBI" id="CHEBI:15378"/>
        <dbReference type="ChEBI" id="CHEBI:57540"/>
        <dbReference type="ChEBI" id="CHEBI:57945"/>
        <dbReference type="ChEBI" id="CHEBI:58538"/>
        <dbReference type="ChEBI" id="CHEBI:58766"/>
        <dbReference type="EC" id="1.1.1.290"/>
    </reaction>
</comment>
<comment type="pathway">
    <text evidence="1">Cofactor biosynthesis; pyridoxine 5'-phosphate biosynthesis; pyridoxine 5'-phosphate from D-erythrose 4-phosphate: step 2/5.</text>
</comment>
<comment type="subunit">
    <text evidence="1">Homodimer.</text>
</comment>
<comment type="subcellular location">
    <subcellularLocation>
        <location evidence="1">Cytoplasm</location>
    </subcellularLocation>
</comment>
<comment type="similarity">
    <text evidence="1">Belongs to the D-isomer specific 2-hydroxyacid dehydrogenase family. PdxB subfamily.</text>
</comment>